<protein>
    <recommendedName>
        <fullName evidence="1">Fluoride-specific ion channel FluC</fullName>
    </recommendedName>
</protein>
<keyword id="KW-0997">Cell inner membrane</keyword>
<keyword id="KW-1003">Cell membrane</keyword>
<keyword id="KW-0407">Ion channel</keyword>
<keyword id="KW-0406">Ion transport</keyword>
<keyword id="KW-0472">Membrane</keyword>
<keyword id="KW-0479">Metal-binding</keyword>
<keyword id="KW-0915">Sodium</keyword>
<keyword id="KW-0812">Transmembrane</keyword>
<keyword id="KW-1133">Transmembrane helix</keyword>
<keyword id="KW-0813">Transport</keyword>
<gene>
    <name evidence="1" type="primary">fluC</name>
    <name evidence="1" type="synonym">crcB</name>
    <name type="ordered locus">C8J_0481</name>
</gene>
<organism>
    <name type="scientific">Campylobacter jejuni subsp. jejuni serotype O:6 (strain 81116 / NCTC 11828)</name>
    <dbReference type="NCBI Taxonomy" id="407148"/>
    <lineage>
        <taxon>Bacteria</taxon>
        <taxon>Pseudomonadati</taxon>
        <taxon>Campylobacterota</taxon>
        <taxon>Epsilonproteobacteria</taxon>
        <taxon>Campylobacterales</taxon>
        <taxon>Campylobacteraceae</taxon>
        <taxon>Campylobacter</taxon>
    </lineage>
</organism>
<comment type="function">
    <text evidence="1">Fluoride-specific ion channel. Important for reducing fluoride concentration in the cell, thus reducing its toxicity.</text>
</comment>
<comment type="catalytic activity">
    <reaction evidence="1">
        <text>fluoride(in) = fluoride(out)</text>
        <dbReference type="Rhea" id="RHEA:76159"/>
        <dbReference type="ChEBI" id="CHEBI:17051"/>
    </reaction>
    <physiologicalReaction direction="left-to-right" evidence="1">
        <dbReference type="Rhea" id="RHEA:76160"/>
    </physiologicalReaction>
</comment>
<comment type="activity regulation">
    <text evidence="1">Na(+) is not transported, but it plays an essential structural role and its presence is essential for fluoride channel function.</text>
</comment>
<comment type="subcellular location">
    <subcellularLocation>
        <location evidence="1">Cell inner membrane</location>
        <topology evidence="1">Multi-pass membrane protein</topology>
    </subcellularLocation>
</comment>
<comment type="similarity">
    <text evidence="1">Belongs to the fluoride channel Fluc/FEX (TC 1.A.43) family.</text>
</comment>
<accession>A8FKU3</accession>
<dbReference type="EMBL" id="CP000814">
    <property type="protein sequence ID" value="ABV52080.1"/>
    <property type="molecule type" value="Genomic_DNA"/>
</dbReference>
<dbReference type="RefSeq" id="WP_002859058.1">
    <property type="nucleotide sequence ID" value="NC_009839.1"/>
</dbReference>
<dbReference type="SMR" id="A8FKU3"/>
<dbReference type="KEGG" id="cju:C8J_0481"/>
<dbReference type="HOGENOM" id="CLU_114342_3_0_7"/>
<dbReference type="GO" id="GO:0005886">
    <property type="term" value="C:plasma membrane"/>
    <property type="evidence" value="ECO:0007669"/>
    <property type="project" value="UniProtKB-SubCell"/>
</dbReference>
<dbReference type="GO" id="GO:0062054">
    <property type="term" value="F:fluoride channel activity"/>
    <property type="evidence" value="ECO:0007669"/>
    <property type="project" value="UniProtKB-UniRule"/>
</dbReference>
<dbReference type="GO" id="GO:0046872">
    <property type="term" value="F:metal ion binding"/>
    <property type="evidence" value="ECO:0007669"/>
    <property type="project" value="UniProtKB-KW"/>
</dbReference>
<dbReference type="GO" id="GO:0140114">
    <property type="term" value="P:cellular detoxification of fluoride"/>
    <property type="evidence" value="ECO:0007669"/>
    <property type="project" value="UniProtKB-UniRule"/>
</dbReference>
<dbReference type="HAMAP" id="MF_00454">
    <property type="entry name" value="FluC"/>
    <property type="match status" value="1"/>
</dbReference>
<dbReference type="InterPro" id="IPR003691">
    <property type="entry name" value="FluC"/>
</dbReference>
<dbReference type="NCBIfam" id="TIGR00494">
    <property type="entry name" value="crcB"/>
    <property type="match status" value="1"/>
</dbReference>
<dbReference type="PANTHER" id="PTHR28259">
    <property type="entry name" value="FLUORIDE EXPORT PROTEIN 1-RELATED"/>
    <property type="match status" value="1"/>
</dbReference>
<dbReference type="PANTHER" id="PTHR28259:SF1">
    <property type="entry name" value="FLUORIDE EXPORT PROTEIN 1-RELATED"/>
    <property type="match status" value="1"/>
</dbReference>
<dbReference type="Pfam" id="PF02537">
    <property type="entry name" value="CRCB"/>
    <property type="match status" value="1"/>
</dbReference>
<name>FLUC_CAMJ8</name>
<reference key="1">
    <citation type="journal article" date="2007" name="J. Bacteriol.">
        <title>The complete genome sequence of Campylobacter jejuni strain 81116 (NCTC11828).</title>
        <authorList>
            <person name="Pearson B.M."/>
            <person name="Gaskin D.J.H."/>
            <person name="Segers R.P.A.M."/>
            <person name="Wells J.M."/>
            <person name="Nuijten P.J.M."/>
            <person name="van Vliet A.H.M."/>
        </authorList>
    </citation>
    <scope>NUCLEOTIDE SEQUENCE [LARGE SCALE GENOMIC DNA]</scope>
    <source>
        <strain>81116 / NCTC 11828</strain>
    </source>
</reference>
<proteinExistence type="inferred from homology"/>
<evidence type="ECO:0000255" key="1">
    <source>
        <dbReference type="HAMAP-Rule" id="MF_00454"/>
    </source>
</evidence>
<sequence>MLNTLLVVGFGGFIGAILRMFSINLVNKFFPYSISLGTLFVNVLGSFIIGLLFSYAQNKGLSPLLKSFISTGFLGAFTTFSTFSYQNLLLLQSGNYLHFALNIILNVFLCLFAAWLGFIIFK</sequence>
<feature type="chain" id="PRO_1000072377" description="Fluoride-specific ion channel FluC">
    <location>
        <begin position="1"/>
        <end position="122"/>
    </location>
</feature>
<feature type="transmembrane region" description="Helical" evidence="1">
    <location>
        <begin position="6"/>
        <end position="26"/>
    </location>
</feature>
<feature type="transmembrane region" description="Helical" evidence="1">
    <location>
        <begin position="33"/>
        <end position="53"/>
    </location>
</feature>
<feature type="transmembrane region" description="Helical" evidence="1">
    <location>
        <begin position="60"/>
        <end position="80"/>
    </location>
</feature>
<feature type="transmembrane region" description="Helical" evidence="1">
    <location>
        <begin position="101"/>
        <end position="121"/>
    </location>
</feature>
<feature type="binding site" evidence="1">
    <location>
        <position position="75"/>
    </location>
    <ligand>
        <name>Na(+)</name>
        <dbReference type="ChEBI" id="CHEBI:29101"/>
        <note>structural</note>
    </ligand>
</feature>
<feature type="binding site" evidence="1">
    <location>
        <position position="78"/>
    </location>
    <ligand>
        <name>Na(+)</name>
        <dbReference type="ChEBI" id="CHEBI:29101"/>
        <note>structural</note>
    </ligand>
</feature>